<comment type="function">
    <text evidence="1">Catalyzes the NAD(P)-dependent oxidation of 4-(phosphooxy)-L-threonine (HTP) into 2-amino-3-oxo-4-(phosphooxy)butyric acid which spontaneously decarboxylates to form 3-amino-2-oxopropyl phosphate (AHAP).</text>
</comment>
<comment type="catalytic activity">
    <reaction evidence="1">
        <text>4-(phosphooxy)-L-threonine + NAD(+) = 3-amino-2-oxopropyl phosphate + CO2 + NADH</text>
        <dbReference type="Rhea" id="RHEA:32275"/>
        <dbReference type="ChEBI" id="CHEBI:16526"/>
        <dbReference type="ChEBI" id="CHEBI:57279"/>
        <dbReference type="ChEBI" id="CHEBI:57540"/>
        <dbReference type="ChEBI" id="CHEBI:57945"/>
        <dbReference type="ChEBI" id="CHEBI:58452"/>
        <dbReference type="EC" id="1.1.1.262"/>
    </reaction>
</comment>
<comment type="cofactor">
    <cofactor evidence="1">
        <name>Zn(2+)</name>
        <dbReference type="ChEBI" id="CHEBI:29105"/>
    </cofactor>
    <cofactor evidence="1">
        <name>Mg(2+)</name>
        <dbReference type="ChEBI" id="CHEBI:18420"/>
    </cofactor>
    <cofactor evidence="1">
        <name>Co(2+)</name>
        <dbReference type="ChEBI" id="CHEBI:48828"/>
    </cofactor>
    <text evidence="1">Binds 1 divalent metal cation per subunit. Can use ions such as Zn(2+), Mg(2+) or Co(2+).</text>
</comment>
<comment type="pathway">
    <text evidence="1">Cofactor biosynthesis; pyridoxine 5'-phosphate biosynthesis; pyridoxine 5'-phosphate from D-erythrose 4-phosphate: step 4/5.</text>
</comment>
<comment type="subunit">
    <text evidence="1">Homodimer.</text>
</comment>
<comment type="subcellular location">
    <subcellularLocation>
        <location evidence="1">Cytoplasm</location>
    </subcellularLocation>
</comment>
<comment type="miscellaneous">
    <text evidence="1">The active site is located at the dimer interface.</text>
</comment>
<comment type="similarity">
    <text evidence="1">Belongs to the PdxA family.</text>
</comment>
<proteinExistence type="inferred from homology"/>
<evidence type="ECO:0000255" key="1">
    <source>
        <dbReference type="HAMAP-Rule" id="MF_00536"/>
    </source>
</evidence>
<reference key="1">
    <citation type="journal article" date="2008" name="J. Bacteriol.">
        <title>The complete genome sequence of Escherichia coli DH10B: insights into the biology of a laboratory workhorse.</title>
        <authorList>
            <person name="Durfee T."/>
            <person name="Nelson R."/>
            <person name="Baldwin S."/>
            <person name="Plunkett G. III"/>
            <person name="Burland V."/>
            <person name="Mau B."/>
            <person name="Petrosino J.F."/>
            <person name="Qin X."/>
            <person name="Muzny D.M."/>
            <person name="Ayele M."/>
            <person name="Gibbs R.A."/>
            <person name="Csorgo B."/>
            <person name="Posfai G."/>
            <person name="Weinstock G.M."/>
            <person name="Blattner F.R."/>
        </authorList>
    </citation>
    <scope>NUCLEOTIDE SEQUENCE [LARGE SCALE GENOMIC DNA]</scope>
    <source>
        <strain>K12 / DH10B</strain>
    </source>
</reference>
<gene>
    <name evidence="1" type="primary">pdxA</name>
    <name type="ordered locus">ECDH10B_0053</name>
</gene>
<name>PDXA_ECODH</name>
<dbReference type="EC" id="1.1.1.262" evidence="1"/>
<dbReference type="EMBL" id="CP000948">
    <property type="protein sequence ID" value="ACB01257.1"/>
    <property type="molecule type" value="Genomic_DNA"/>
</dbReference>
<dbReference type="RefSeq" id="WP_000241277.1">
    <property type="nucleotide sequence ID" value="NC_010473.1"/>
</dbReference>
<dbReference type="SMR" id="B1XC53"/>
<dbReference type="KEGG" id="ecd:ECDH10B_0053"/>
<dbReference type="HOGENOM" id="CLU_040168_1_0_6"/>
<dbReference type="UniPathway" id="UPA00244">
    <property type="reaction ID" value="UER00312"/>
</dbReference>
<dbReference type="GO" id="GO:0005737">
    <property type="term" value="C:cytoplasm"/>
    <property type="evidence" value="ECO:0007669"/>
    <property type="project" value="UniProtKB-SubCell"/>
</dbReference>
<dbReference type="GO" id="GO:0050570">
    <property type="term" value="F:4-hydroxythreonine-4-phosphate dehydrogenase activity"/>
    <property type="evidence" value="ECO:0007669"/>
    <property type="project" value="UniProtKB-UniRule"/>
</dbReference>
<dbReference type="GO" id="GO:0050897">
    <property type="term" value="F:cobalt ion binding"/>
    <property type="evidence" value="ECO:0007669"/>
    <property type="project" value="UniProtKB-UniRule"/>
</dbReference>
<dbReference type="GO" id="GO:0000287">
    <property type="term" value="F:magnesium ion binding"/>
    <property type="evidence" value="ECO:0007669"/>
    <property type="project" value="UniProtKB-UniRule"/>
</dbReference>
<dbReference type="GO" id="GO:0051287">
    <property type="term" value="F:NAD binding"/>
    <property type="evidence" value="ECO:0007669"/>
    <property type="project" value="InterPro"/>
</dbReference>
<dbReference type="GO" id="GO:0008270">
    <property type="term" value="F:zinc ion binding"/>
    <property type="evidence" value="ECO:0007669"/>
    <property type="project" value="UniProtKB-UniRule"/>
</dbReference>
<dbReference type="GO" id="GO:0042823">
    <property type="term" value="P:pyridoxal phosphate biosynthetic process"/>
    <property type="evidence" value="ECO:0007669"/>
    <property type="project" value="UniProtKB-UniRule"/>
</dbReference>
<dbReference type="GO" id="GO:0008615">
    <property type="term" value="P:pyridoxine biosynthetic process"/>
    <property type="evidence" value="ECO:0007669"/>
    <property type="project" value="UniProtKB-UniRule"/>
</dbReference>
<dbReference type="FunFam" id="3.40.718.10:FF:000010">
    <property type="entry name" value="4-hydroxythreonine-4-phosphate dehydrogenase"/>
    <property type="match status" value="1"/>
</dbReference>
<dbReference type="Gene3D" id="3.40.718.10">
    <property type="entry name" value="Isopropylmalate Dehydrogenase"/>
    <property type="match status" value="1"/>
</dbReference>
<dbReference type="HAMAP" id="MF_00536">
    <property type="entry name" value="PdxA"/>
    <property type="match status" value="1"/>
</dbReference>
<dbReference type="InterPro" id="IPR037510">
    <property type="entry name" value="PdxA"/>
</dbReference>
<dbReference type="InterPro" id="IPR005255">
    <property type="entry name" value="PdxA_fam"/>
</dbReference>
<dbReference type="NCBIfam" id="TIGR00557">
    <property type="entry name" value="pdxA"/>
    <property type="match status" value="1"/>
</dbReference>
<dbReference type="PANTHER" id="PTHR30004">
    <property type="entry name" value="4-HYDROXYTHREONINE-4-PHOSPHATE DEHYDROGENASE"/>
    <property type="match status" value="1"/>
</dbReference>
<dbReference type="PANTHER" id="PTHR30004:SF5">
    <property type="entry name" value="4-HYDROXYTHREONINE-4-PHOSPHATE DEHYDROGENASE"/>
    <property type="match status" value="1"/>
</dbReference>
<dbReference type="Pfam" id="PF04166">
    <property type="entry name" value="PdxA"/>
    <property type="match status" value="1"/>
</dbReference>
<dbReference type="SUPFAM" id="SSF53659">
    <property type="entry name" value="Isocitrate/Isopropylmalate dehydrogenase-like"/>
    <property type="match status" value="1"/>
</dbReference>
<protein>
    <recommendedName>
        <fullName evidence="1">4-hydroxythreonine-4-phosphate dehydrogenase</fullName>
        <ecNumber evidence="1">1.1.1.262</ecNumber>
    </recommendedName>
    <alternativeName>
        <fullName evidence="1">4-(phosphohydroxy)-L-threonine dehydrogenase</fullName>
    </alternativeName>
</protein>
<feature type="chain" id="PRO_1000128244" description="4-hydroxythreonine-4-phosphate dehydrogenase">
    <location>
        <begin position="1"/>
        <end position="329"/>
    </location>
</feature>
<feature type="binding site" evidence="1">
    <location>
        <position position="136"/>
    </location>
    <ligand>
        <name>substrate</name>
    </ligand>
</feature>
<feature type="binding site" evidence="1">
    <location>
        <position position="137"/>
    </location>
    <ligand>
        <name>substrate</name>
    </ligand>
</feature>
<feature type="binding site" evidence="1">
    <location>
        <position position="166"/>
    </location>
    <ligand>
        <name>a divalent metal cation</name>
        <dbReference type="ChEBI" id="CHEBI:60240"/>
        <note>ligand shared between dimeric partners</note>
    </ligand>
</feature>
<feature type="binding site" evidence="1">
    <location>
        <position position="211"/>
    </location>
    <ligand>
        <name>a divalent metal cation</name>
        <dbReference type="ChEBI" id="CHEBI:60240"/>
        <note>ligand shared between dimeric partners</note>
    </ligand>
</feature>
<feature type="binding site" evidence="1">
    <location>
        <position position="266"/>
    </location>
    <ligand>
        <name>a divalent metal cation</name>
        <dbReference type="ChEBI" id="CHEBI:60240"/>
        <note>ligand shared between dimeric partners</note>
    </ligand>
</feature>
<feature type="binding site" evidence="1">
    <location>
        <position position="274"/>
    </location>
    <ligand>
        <name>substrate</name>
    </ligand>
</feature>
<feature type="binding site" evidence="1">
    <location>
        <position position="283"/>
    </location>
    <ligand>
        <name>substrate</name>
    </ligand>
</feature>
<feature type="binding site" evidence="1">
    <location>
        <position position="292"/>
    </location>
    <ligand>
        <name>substrate</name>
    </ligand>
</feature>
<sequence length="329" mass="35114">MVKTQRVVITPGEPAGIGPDLVVQLAQREWPVELVVCADATLLTNRAAMLGLPLTLRPYSPNSPAQPQTAGTLTLLPVALRAPVTAGQLAVENGHYVVETLARACDGCLNGEFAALITGPVHKGVINDAGIPFTGHTEFFEERSQAKKVVMMLATEELRVALATTHLPLRDIADAITPALLHEVIAILHHDLRTKFGIAEPRILVCGLNPHAGEGGHMGTEEIDTIIPVLNELRAQGMKLNGPLPADTLFQPKYLDNADAVLAMYHDQGLPVLKYQGFGRGVNITLGLPFIRTSVDHGTALELAGRGKADVGSFITALNLAIKMIVNTQ</sequence>
<keyword id="KW-0170">Cobalt</keyword>
<keyword id="KW-0963">Cytoplasm</keyword>
<keyword id="KW-0460">Magnesium</keyword>
<keyword id="KW-0479">Metal-binding</keyword>
<keyword id="KW-0520">NAD</keyword>
<keyword id="KW-0521">NADP</keyword>
<keyword id="KW-0560">Oxidoreductase</keyword>
<keyword id="KW-0664">Pyridoxine biosynthesis</keyword>
<keyword id="KW-0862">Zinc</keyword>
<accession>B1XC53</accession>
<organism>
    <name type="scientific">Escherichia coli (strain K12 / DH10B)</name>
    <dbReference type="NCBI Taxonomy" id="316385"/>
    <lineage>
        <taxon>Bacteria</taxon>
        <taxon>Pseudomonadati</taxon>
        <taxon>Pseudomonadota</taxon>
        <taxon>Gammaproteobacteria</taxon>
        <taxon>Enterobacterales</taxon>
        <taxon>Enterobacteriaceae</taxon>
        <taxon>Escherichia</taxon>
    </lineage>
</organism>